<evidence type="ECO:0000250" key="1">
    <source>
        <dbReference type="UniProtKB" id="Q8NG06"/>
    </source>
</evidence>
<evidence type="ECO:0000255" key="2"/>
<evidence type="ECO:0000255" key="3">
    <source>
        <dbReference type="PROSITE-ProRule" id="PRU00024"/>
    </source>
</evidence>
<evidence type="ECO:0000255" key="4">
    <source>
        <dbReference type="PROSITE-ProRule" id="PRU00175"/>
    </source>
</evidence>
<evidence type="ECO:0000255" key="5">
    <source>
        <dbReference type="PROSITE-ProRule" id="PRU00548"/>
    </source>
</evidence>
<evidence type="ECO:0000269" key="6">
    <source>
    </source>
</evidence>
<evidence type="ECO:0000305" key="7"/>
<keyword id="KW-0175">Coiled coil</keyword>
<keyword id="KW-0479">Metal-binding</keyword>
<keyword id="KW-1185">Reference proteome</keyword>
<keyword id="KW-0808">Transferase</keyword>
<keyword id="KW-0833">Ubl conjugation pathway</keyword>
<keyword id="KW-0862">Zinc</keyword>
<keyword id="KW-0863">Zinc-finger</keyword>
<comment type="function">
    <text evidence="1">E3 ubiquitin ligase induced during late erythropoiesis. Directly binds and ubiquitinates the intermediate chain of the microtubule motor dynein (DYNC1LI1/DYNC1LI2), stimulating the degradation of the dynein holoprotein complex. May participate in the erythroblast enucleation process through regulation of nuclear polarization.</text>
</comment>
<comment type="catalytic activity">
    <reaction>
        <text>S-ubiquitinyl-[E2 ubiquitin-conjugating enzyme]-L-cysteine + [acceptor protein]-L-lysine = [E2 ubiquitin-conjugating enzyme]-L-cysteine + N(6)-ubiquitinyl-[acceptor protein]-L-lysine.</text>
        <dbReference type="EC" id="2.3.2.27"/>
    </reaction>
</comment>
<comment type="pathway">
    <text evidence="1">Protein modification; protein ubiquitination.</text>
</comment>
<comment type="tissue specificity">
    <text evidence="6">Expressed in erythroblasts.</text>
</comment>
<comment type="domain">
    <text evidence="1">The RING finger is required for ubiquitin ligase activity.</text>
</comment>
<comment type="similarity">
    <text evidence="7">Belongs to the TRIM/RBCC family.</text>
</comment>
<name>TRI58_MOUSE</name>
<accession>Q5NCC9</accession>
<proteinExistence type="evidence at transcript level"/>
<feature type="chain" id="PRO_0000272302" description="E3 ubiquitin-protein ligase TRIM58">
    <location>
        <begin position="1"/>
        <end position="485"/>
    </location>
</feature>
<feature type="domain" description="B30.2/SPRY" evidence="5">
    <location>
        <begin position="271"/>
        <end position="466"/>
    </location>
</feature>
<feature type="zinc finger region" description="RING-type" evidence="4">
    <location>
        <begin position="15"/>
        <end position="59"/>
    </location>
</feature>
<feature type="zinc finger region" description="B box-type" evidence="3">
    <location>
        <begin position="90"/>
        <end position="131"/>
    </location>
</feature>
<feature type="coiled-coil region" evidence="2">
    <location>
        <begin position="192"/>
        <end position="241"/>
    </location>
</feature>
<feature type="binding site" evidence="3">
    <location>
        <position position="95"/>
    </location>
    <ligand>
        <name>Zn(2+)</name>
        <dbReference type="ChEBI" id="CHEBI:29105"/>
    </ligand>
</feature>
<feature type="binding site" evidence="3">
    <location>
        <position position="98"/>
    </location>
    <ligand>
        <name>Zn(2+)</name>
        <dbReference type="ChEBI" id="CHEBI:29105"/>
    </ligand>
</feature>
<feature type="binding site" evidence="3">
    <location>
        <position position="117"/>
    </location>
    <ligand>
        <name>Zn(2+)</name>
        <dbReference type="ChEBI" id="CHEBI:29105"/>
    </ligand>
</feature>
<feature type="binding site" evidence="3">
    <location>
        <position position="123"/>
    </location>
    <ligand>
        <name>Zn(2+)</name>
        <dbReference type="ChEBI" id="CHEBI:29105"/>
    </ligand>
</feature>
<reference key="1">
    <citation type="journal article" date="2009" name="PLoS Biol.">
        <title>Lineage-specific biology revealed by a finished genome assembly of the mouse.</title>
        <authorList>
            <person name="Church D.M."/>
            <person name="Goodstadt L."/>
            <person name="Hillier L.W."/>
            <person name="Zody M.C."/>
            <person name="Goldstein S."/>
            <person name="She X."/>
            <person name="Bult C.J."/>
            <person name="Agarwala R."/>
            <person name="Cherry J.L."/>
            <person name="DiCuccio M."/>
            <person name="Hlavina W."/>
            <person name="Kapustin Y."/>
            <person name="Meric P."/>
            <person name="Maglott D."/>
            <person name="Birtle Z."/>
            <person name="Marques A.C."/>
            <person name="Graves T."/>
            <person name="Zhou S."/>
            <person name="Teague B."/>
            <person name="Potamousis K."/>
            <person name="Churas C."/>
            <person name="Place M."/>
            <person name="Herschleb J."/>
            <person name="Runnheim R."/>
            <person name="Forrest D."/>
            <person name="Amos-Landgraf J."/>
            <person name="Schwartz D.C."/>
            <person name="Cheng Z."/>
            <person name="Lindblad-Toh K."/>
            <person name="Eichler E.E."/>
            <person name="Ponting C.P."/>
        </authorList>
    </citation>
    <scope>NUCLEOTIDE SEQUENCE [LARGE SCALE GENOMIC DNA]</scope>
    <source>
        <strain>C57BL/6J</strain>
    </source>
</reference>
<reference key="2">
    <citation type="journal article" date="2014" name="Dev. Cell">
        <title>Trim58 degrades Dynein and regulates terminal erythropoiesis.</title>
        <authorList>
            <person name="Thom C.S."/>
            <person name="Traxler E.A."/>
            <person name="Khandros E."/>
            <person name="Nickas J.M."/>
            <person name="Zhou O.Y."/>
            <person name="Lazarus J.E."/>
            <person name="Silva A.P."/>
            <person name="Prabhu D."/>
            <person name="Yao Y."/>
            <person name="Aribeana C."/>
            <person name="Fuchs S.Y."/>
            <person name="Mackay J.P."/>
            <person name="Holzbaur E.L."/>
            <person name="Weiss M.J."/>
        </authorList>
    </citation>
    <scope>TISSUE SPECIFICITY</scope>
</reference>
<organism>
    <name type="scientific">Mus musculus</name>
    <name type="common">Mouse</name>
    <dbReference type="NCBI Taxonomy" id="10090"/>
    <lineage>
        <taxon>Eukaryota</taxon>
        <taxon>Metazoa</taxon>
        <taxon>Chordata</taxon>
        <taxon>Craniata</taxon>
        <taxon>Vertebrata</taxon>
        <taxon>Euteleostomi</taxon>
        <taxon>Mammalia</taxon>
        <taxon>Eutheria</taxon>
        <taxon>Euarchontoglires</taxon>
        <taxon>Glires</taxon>
        <taxon>Rodentia</taxon>
        <taxon>Myomorpha</taxon>
        <taxon>Muroidea</taxon>
        <taxon>Muridae</taxon>
        <taxon>Murinae</taxon>
        <taxon>Mus</taxon>
        <taxon>Mus</taxon>
    </lineage>
</organism>
<dbReference type="EC" id="2.3.2.27"/>
<dbReference type="EMBL" id="AL645802">
    <property type="status" value="NOT_ANNOTATED_CDS"/>
    <property type="molecule type" value="Genomic_DNA"/>
</dbReference>
<dbReference type="CCDS" id="CCDS24738.1"/>
<dbReference type="RefSeq" id="NP_001034136.1">
    <property type="nucleotide sequence ID" value="NM_001039047.2"/>
</dbReference>
<dbReference type="SMR" id="Q5NCC9"/>
<dbReference type="BioGRID" id="229784">
    <property type="interactions" value="1"/>
</dbReference>
<dbReference type="FunCoup" id="Q5NCC9">
    <property type="interactions" value="473"/>
</dbReference>
<dbReference type="STRING" id="10090.ENSMUSP00000074594"/>
<dbReference type="iPTMnet" id="Q5NCC9"/>
<dbReference type="PhosphoSitePlus" id="Q5NCC9"/>
<dbReference type="PaxDb" id="10090-ENSMUSP00000074594"/>
<dbReference type="ProteomicsDB" id="258978"/>
<dbReference type="Antibodypedia" id="20850">
    <property type="antibodies" value="105 antibodies from 19 providers"/>
</dbReference>
<dbReference type="DNASU" id="216781"/>
<dbReference type="Ensembl" id="ENSMUST00000075084.5">
    <property type="protein sequence ID" value="ENSMUSP00000074594.5"/>
    <property type="gene ID" value="ENSMUSG00000037124.7"/>
</dbReference>
<dbReference type="GeneID" id="216781"/>
<dbReference type="KEGG" id="mmu:216781"/>
<dbReference type="UCSC" id="uc007jby.1">
    <property type="organism name" value="mouse"/>
</dbReference>
<dbReference type="AGR" id="MGI:2684862"/>
<dbReference type="CTD" id="25893"/>
<dbReference type="MGI" id="MGI:2684862">
    <property type="gene designation" value="Trim58"/>
</dbReference>
<dbReference type="VEuPathDB" id="HostDB:ENSMUSG00000037124"/>
<dbReference type="eggNOG" id="KOG2177">
    <property type="taxonomic scope" value="Eukaryota"/>
</dbReference>
<dbReference type="GeneTree" id="ENSGT00940000162246"/>
<dbReference type="HOGENOM" id="CLU_013137_0_3_1"/>
<dbReference type="InParanoid" id="Q5NCC9"/>
<dbReference type="OMA" id="KTACRIP"/>
<dbReference type="OrthoDB" id="128536at2759"/>
<dbReference type="PhylomeDB" id="Q5NCC9"/>
<dbReference type="TreeFam" id="TF338674"/>
<dbReference type="UniPathway" id="UPA00143"/>
<dbReference type="BioGRID-ORCS" id="216781">
    <property type="hits" value="1 hit in 77 CRISPR screens"/>
</dbReference>
<dbReference type="PRO" id="PR:Q5NCC9"/>
<dbReference type="Proteomes" id="UP000000589">
    <property type="component" value="Chromosome 11"/>
</dbReference>
<dbReference type="RNAct" id="Q5NCC9">
    <property type="molecule type" value="protein"/>
</dbReference>
<dbReference type="Bgee" id="ENSMUSG00000037124">
    <property type="expression patterns" value="Expressed in bone marrow and 11 other cell types or tissues"/>
</dbReference>
<dbReference type="GO" id="GO:0045504">
    <property type="term" value="F:dynein heavy chain binding"/>
    <property type="evidence" value="ECO:0000314"/>
    <property type="project" value="UniProtKB"/>
</dbReference>
<dbReference type="GO" id="GO:0045505">
    <property type="term" value="F:dynein intermediate chain binding"/>
    <property type="evidence" value="ECO:0000314"/>
    <property type="project" value="UniProtKB"/>
</dbReference>
<dbReference type="GO" id="GO:0061630">
    <property type="term" value="F:ubiquitin protein ligase activity"/>
    <property type="evidence" value="ECO:0000314"/>
    <property type="project" value="UniProtKB"/>
</dbReference>
<dbReference type="GO" id="GO:0008270">
    <property type="term" value="F:zinc ion binding"/>
    <property type="evidence" value="ECO:0007669"/>
    <property type="project" value="UniProtKB-KW"/>
</dbReference>
<dbReference type="GO" id="GO:0061931">
    <property type="term" value="P:positive regulation of erythrocyte enucleation"/>
    <property type="evidence" value="ECO:0000315"/>
    <property type="project" value="UniProtKB"/>
</dbReference>
<dbReference type="GO" id="GO:0051865">
    <property type="term" value="P:protein autoubiquitination"/>
    <property type="evidence" value="ECO:0000314"/>
    <property type="project" value="UniProtKB"/>
</dbReference>
<dbReference type="GO" id="GO:0000209">
    <property type="term" value="P:protein polyubiquitination"/>
    <property type="evidence" value="ECO:0000314"/>
    <property type="project" value="UniProtKB"/>
</dbReference>
<dbReference type="GO" id="GO:1902838">
    <property type="term" value="P:regulation of nuclear migration along microtubule"/>
    <property type="evidence" value="ECO:0000315"/>
    <property type="project" value="UniProtKB"/>
</dbReference>
<dbReference type="GO" id="GO:0006511">
    <property type="term" value="P:ubiquitin-dependent protein catabolic process"/>
    <property type="evidence" value="ECO:0000315"/>
    <property type="project" value="UniProtKB"/>
</dbReference>
<dbReference type="CDD" id="cd19780">
    <property type="entry name" value="Bbox2_TRIM39-like"/>
    <property type="match status" value="1"/>
</dbReference>
<dbReference type="CDD" id="cd16606">
    <property type="entry name" value="RING-HC_TRIM58_C-IV"/>
    <property type="match status" value="1"/>
</dbReference>
<dbReference type="CDD" id="cd15816">
    <property type="entry name" value="SPRY_PRY_TRIM58"/>
    <property type="match status" value="1"/>
</dbReference>
<dbReference type="FunFam" id="2.60.120.920:FF:000004">
    <property type="entry name" value="Butyrophilin subfamily 1 member A1"/>
    <property type="match status" value="1"/>
</dbReference>
<dbReference type="Gene3D" id="2.60.120.920">
    <property type="match status" value="1"/>
</dbReference>
<dbReference type="Gene3D" id="3.30.160.60">
    <property type="entry name" value="Classic Zinc Finger"/>
    <property type="match status" value="1"/>
</dbReference>
<dbReference type="Gene3D" id="3.30.40.10">
    <property type="entry name" value="Zinc/RING finger domain, C3HC4 (zinc finger)"/>
    <property type="match status" value="1"/>
</dbReference>
<dbReference type="InterPro" id="IPR001870">
    <property type="entry name" value="B30.2/SPRY"/>
</dbReference>
<dbReference type="InterPro" id="IPR043136">
    <property type="entry name" value="B30.2/SPRY_sf"/>
</dbReference>
<dbReference type="InterPro" id="IPR003879">
    <property type="entry name" value="Butyrophylin_SPRY"/>
</dbReference>
<dbReference type="InterPro" id="IPR013320">
    <property type="entry name" value="ConA-like_dom_sf"/>
</dbReference>
<dbReference type="InterPro" id="IPR006574">
    <property type="entry name" value="PRY"/>
</dbReference>
<dbReference type="InterPro" id="IPR035787">
    <property type="entry name" value="SPRY/PRY_TRIM58"/>
</dbReference>
<dbReference type="InterPro" id="IPR003877">
    <property type="entry name" value="SPRY_dom"/>
</dbReference>
<dbReference type="InterPro" id="IPR050143">
    <property type="entry name" value="TRIM/RBCC"/>
</dbReference>
<dbReference type="InterPro" id="IPR042699">
    <property type="entry name" value="TRIM58_RING-HC"/>
</dbReference>
<dbReference type="InterPro" id="IPR000315">
    <property type="entry name" value="Znf_B-box"/>
</dbReference>
<dbReference type="InterPro" id="IPR001841">
    <property type="entry name" value="Znf_RING"/>
</dbReference>
<dbReference type="InterPro" id="IPR013083">
    <property type="entry name" value="Znf_RING/FYVE/PHD"/>
</dbReference>
<dbReference type="InterPro" id="IPR017907">
    <property type="entry name" value="Znf_RING_CS"/>
</dbReference>
<dbReference type="PANTHER" id="PTHR24103">
    <property type="entry name" value="E3 UBIQUITIN-PROTEIN LIGASE TRIM"/>
    <property type="match status" value="1"/>
</dbReference>
<dbReference type="Pfam" id="PF13765">
    <property type="entry name" value="PRY"/>
    <property type="match status" value="1"/>
</dbReference>
<dbReference type="Pfam" id="PF00622">
    <property type="entry name" value="SPRY"/>
    <property type="match status" value="1"/>
</dbReference>
<dbReference type="Pfam" id="PF00643">
    <property type="entry name" value="zf-B_box"/>
    <property type="match status" value="1"/>
</dbReference>
<dbReference type="Pfam" id="PF15227">
    <property type="entry name" value="zf-C3HC4_4"/>
    <property type="match status" value="1"/>
</dbReference>
<dbReference type="PRINTS" id="PR01407">
    <property type="entry name" value="BUTYPHLNCDUF"/>
</dbReference>
<dbReference type="SMART" id="SM00336">
    <property type="entry name" value="BBOX"/>
    <property type="match status" value="1"/>
</dbReference>
<dbReference type="SMART" id="SM00589">
    <property type="entry name" value="PRY"/>
    <property type="match status" value="1"/>
</dbReference>
<dbReference type="SMART" id="SM00184">
    <property type="entry name" value="RING"/>
    <property type="match status" value="1"/>
</dbReference>
<dbReference type="SMART" id="SM00449">
    <property type="entry name" value="SPRY"/>
    <property type="match status" value="1"/>
</dbReference>
<dbReference type="SUPFAM" id="SSF57845">
    <property type="entry name" value="B-box zinc-binding domain"/>
    <property type="match status" value="1"/>
</dbReference>
<dbReference type="SUPFAM" id="SSF49899">
    <property type="entry name" value="Concanavalin A-like lectins/glucanases"/>
    <property type="match status" value="1"/>
</dbReference>
<dbReference type="SUPFAM" id="SSF57850">
    <property type="entry name" value="RING/U-box"/>
    <property type="match status" value="1"/>
</dbReference>
<dbReference type="PROSITE" id="PS50188">
    <property type="entry name" value="B302_SPRY"/>
    <property type="match status" value="1"/>
</dbReference>
<dbReference type="PROSITE" id="PS50119">
    <property type="entry name" value="ZF_BBOX"/>
    <property type="match status" value="1"/>
</dbReference>
<dbReference type="PROSITE" id="PS00518">
    <property type="entry name" value="ZF_RING_1"/>
    <property type="match status" value="1"/>
</dbReference>
<dbReference type="PROSITE" id="PS50089">
    <property type="entry name" value="ZF_RING_2"/>
    <property type="match status" value="1"/>
</dbReference>
<gene>
    <name type="primary">Trim58</name>
    <name type="synonym">Gm16</name>
</gene>
<sequence>MATAPGERLQEEARCSVCLDFLQEPISVDCGHSFCLRCISEFCEKSDSAQGVYACPQCRGPFRPASFRPNRQLASLVDSVRQLGLGTGHAGSRQCARHGEDLSHFCEEDQTMLCWVCDTSPEHRSHRTETLQEAASRYQRMLRASLELVKKEMEEALTQEANVGKKTIIWKEKVEMQRQRFRLEFEKHRGFLAQEEQLQLRRLEEEERATLQRLRDSRNRLAQQNKALKELAEELEERSQRPAPGLLEGARGVLTRCEAITRLEPEAVPMDLKTVCRIPGMREMLRKFQVDVKLDPATAHPSLLLTADLRSVQDAEVWRDVPSNPERFDTWPCILGLQGFSSGRHYWEVIVGERAEWGLGVCRDSVLRKGETTPSPENGVWAMWLLRGNEYMVLSSPSVPVLQDERPRRIGIFLDYEAGEISFYNVTNGSYIYTFNHLFSGVLRPYFFVCDTTPLILPPMTEAAPGNWTPRGIFDLAAAARNEEY</sequence>
<protein>
    <recommendedName>
        <fullName>E3 ubiquitin-protein ligase TRIM58</fullName>
        <ecNumber>2.3.2.27</ecNumber>
    </recommendedName>
    <alternativeName>
        <fullName evidence="7">RING-type E3 ubiquitin transferase TRIM58</fullName>
    </alternativeName>
    <alternativeName>
        <fullName>Tripartite motif-containing protein 58</fullName>
    </alternativeName>
</protein>